<reference evidence="9 10" key="1">
    <citation type="journal article" date="2006" name="Dev. Dyn.">
        <title>Xenopus Zic4: conservation and diversification of expression profiles and protein function among the Xenopus Zic family.</title>
        <authorList>
            <person name="Fujimi T.J."/>
            <person name="Mikoshiba K."/>
            <person name="Aruga J."/>
        </authorList>
    </citation>
    <scope>NUCLEOTIDE SEQUENCE [MRNA]</scope>
    <scope>FUNCTION</scope>
    <scope>TISSUE SPECIFICITY</scope>
    <scope>DEVELOPMENTAL STAGE</scope>
    <source>
        <tissue evidence="7">Neurula</tissue>
    </source>
</reference>
<gene>
    <name type="primary">zic4</name>
</gene>
<evidence type="ECO:0000250" key="1"/>
<evidence type="ECO:0000250" key="2">
    <source>
        <dbReference type="UniProtKB" id="O73689"/>
    </source>
</evidence>
<evidence type="ECO:0000250" key="3">
    <source>
        <dbReference type="UniProtKB" id="Q8N9L1"/>
    </source>
</evidence>
<evidence type="ECO:0000255" key="4"/>
<evidence type="ECO:0000255" key="5">
    <source>
        <dbReference type="PROSITE-ProRule" id="PRU00042"/>
    </source>
</evidence>
<evidence type="ECO:0000256" key="6">
    <source>
        <dbReference type="SAM" id="MobiDB-lite"/>
    </source>
</evidence>
<evidence type="ECO:0000269" key="7">
    <source>
    </source>
</evidence>
<evidence type="ECO:0000303" key="8">
    <source>
    </source>
</evidence>
<evidence type="ECO:0000305" key="9"/>
<evidence type="ECO:0000312" key="10">
    <source>
        <dbReference type="EMBL" id="BAF36750.1"/>
    </source>
</evidence>
<name>ZIC4_XENLA</name>
<protein>
    <recommendedName>
        <fullName evidence="8">Zinc finger protein ZIC 4</fullName>
        <shortName evidence="8">XlZic4</shortName>
    </recommendedName>
    <alternativeName>
        <fullName evidence="3">Zinc finger protein of the cerebellum 4</fullName>
    </alternativeName>
</protein>
<proteinExistence type="evidence at transcript level"/>
<organism>
    <name type="scientific">Xenopus laevis</name>
    <name type="common">African clawed frog</name>
    <dbReference type="NCBI Taxonomy" id="8355"/>
    <lineage>
        <taxon>Eukaryota</taxon>
        <taxon>Metazoa</taxon>
        <taxon>Chordata</taxon>
        <taxon>Craniata</taxon>
        <taxon>Vertebrata</taxon>
        <taxon>Euteleostomi</taxon>
        <taxon>Amphibia</taxon>
        <taxon>Batrachia</taxon>
        <taxon>Anura</taxon>
        <taxon>Pipoidea</taxon>
        <taxon>Pipidae</taxon>
        <taxon>Xenopodinae</taxon>
        <taxon>Xenopus</taxon>
        <taxon>Xenopus</taxon>
    </lineage>
</organism>
<feature type="chain" id="PRO_0000364029" description="Zinc finger protein ZIC 4">
    <location>
        <begin position="1"/>
        <end position="530"/>
    </location>
</feature>
<feature type="zinc finger region" description="C2H2-type 1; atypical" evidence="5">
    <location>
        <begin position="284"/>
        <end position="317"/>
    </location>
</feature>
<feature type="zinc finger region" description="C2H2-type 2; atypical" evidence="5">
    <location>
        <begin position="326"/>
        <end position="353"/>
    </location>
</feature>
<feature type="zinc finger region" description="C2H2-type 3" evidence="5">
    <location>
        <begin position="359"/>
        <end position="383"/>
    </location>
</feature>
<feature type="zinc finger region" description="C2H2-type 4" evidence="5">
    <location>
        <begin position="389"/>
        <end position="413"/>
    </location>
</feature>
<feature type="zinc finger region" description="C2H2-type 5" evidence="5">
    <location>
        <begin position="419"/>
        <end position="443"/>
    </location>
</feature>
<feature type="region of interest" description="Disordered" evidence="6">
    <location>
        <begin position="31"/>
        <end position="50"/>
    </location>
</feature>
<feature type="region of interest" description="Disordered" evidence="6">
    <location>
        <begin position="87"/>
        <end position="138"/>
    </location>
</feature>
<feature type="region of interest" description="Disordered" evidence="6">
    <location>
        <begin position="432"/>
        <end position="530"/>
    </location>
</feature>
<feature type="compositionally biased region" description="Basic residues" evidence="6">
    <location>
        <begin position="31"/>
        <end position="40"/>
    </location>
</feature>
<feature type="compositionally biased region" description="Basic residues" evidence="6">
    <location>
        <begin position="97"/>
        <end position="113"/>
    </location>
</feature>
<feature type="compositionally biased region" description="Basic residues" evidence="6">
    <location>
        <begin position="435"/>
        <end position="444"/>
    </location>
</feature>
<feature type="compositionally biased region" description="Low complexity" evidence="6">
    <location>
        <begin position="455"/>
        <end position="467"/>
    </location>
</feature>
<feature type="compositionally biased region" description="Low complexity" evidence="6">
    <location>
        <begin position="474"/>
        <end position="485"/>
    </location>
</feature>
<feature type="compositionally biased region" description="Polar residues" evidence="6">
    <location>
        <begin position="520"/>
        <end position="530"/>
    </location>
</feature>
<dbReference type="EMBL" id="AB259564">
    <property type="protein sequence ID" value="BAF36750.1"/>
    <property type="molecule type" value="mRNA"/>
</dbReference>
<dbReference type="RefSeq" id="NP_001121252.1">
    <property type="nucleotide sequence ID" value="NM_001127780.1"/>
</dbReference>
<dbReference type="SMR" id="A0JC51"/>
<dbReference type="GeneID" id="100158334"/>
<dbReference type="KEGG" id="xla:100158334"/>
<dbReference type="AGR" id="Xenbase:XB-GENE-1033019"/>
<dbReference type="CTD" id="100158334"/>
<dbReference type="Xenbase" id="XB-GENE-1033019">
    <property type="gene designation" value="zic4.L"/>
</dbReference>
<dbReference type="OrthoDB" id="3214149at2759"/>
<dbReference type="Proteomes" id="UP000186698">
    <property type="component" value="Chromosome 5L"/>
</dbReference>
<dbReference type="Bgee" id="100158334">
    <property type="expression patterns" value="Expressed in brain and 6 other cell types or tissues"/>
</dbReference>
<dbReference type="GO" id="GO:0005634">
    <property type="term" value="C:nucleus"/>
    <property type="evidence" value="ECO:0000250"/>
    <property type="project" value="UniProtKB"/>
</dbReference>
<dbReference type="GO" id="GO:0003677">
    <property type="term" value="F:DNA binding"/>
    <property type="evidence" value="ECO:0000250"/>
    <property type="project" value="UniProtKB"/>
</dbReference>
<dbReference type="GO" id="GO:0000981">
    <property type="term" value="F:DNA-binding transcription factor activity, RNA polymerase II-specific"/>
    <property type="evidence" value="ECO:0000318"/>
    <property type="project" value="GO_Central"/>
</dbReference>
<dbReference type="GO" id="GO:0000978">
    <property type="term" value="F:RNA polymerase II cis-regulatory region sequence-specific DNA binding"/>
    <property type="evidence" value="ECO:0000318"/>
    <property type="project" value="GO_Central"/>
</dbReference>
<dbReference type="GO" id="GO:0008270">
    <property type="term" value="F:zinc ion binding"/>
    <property type="evidence" value="ECO:0007669"/>
    <property type="project" value="UniProtKB-KW"/>
</dbReference>
<dbReference type="GO" id="GO:0007417">
    <property type="term" value="P:central nervous system development"/>
    <property type="evidence" value="ECO:0000318"/>
    <property type="project" value="GO_Central"/>
</dbReference>
<dbReference type="GO" id="GO:0014029">
    <property type="term" value="P:neural crest formation"/>
    <property type="evidence" value="ECO:0000315"/>
    <property type="project" value="UniProtKB"/>
</dbReference>
<dbReference type="GO" id="GO:0006357">
    <property type="term" value="P:regulation of transcription by RNA polymerase II"/>
    <property type="evidence" value="ECO:0000318"/>
    <property type="project" value="GO_Central"/>
</dbReference>
<dbReference type="FunFam" id="3.30.160.60:FF:000035">
    <property type="entry name" value="Zinc finger protein ZIC 1"/>
    <property type="match status" value="1"/>
</dbReference>
<dbReference type="FunFam" id="3.30.160.60:FF:000039">
    <property type="entry name" value="Zinc finger protein ZIC 1"/>
    <property type="match status" value="1"/>
</dbReference>
<dbReference type="FunFam" id="3.30.160.60:FF:000041">
    <property type="entry name" value="Zinc finger protein ZIC 1"/>
    <property type="match status" value="1"/>
</dbReference>
<dbReference type="FunFam" id="3.30.160.60:FF:001330">
    <property type="entry name" value="Zinc finger protein ZIC 4"/>
    <property type="match status" value="1"/>
</dbReference>
<dbReference type="Gene3D" id="3.30.160.60">
    <property type="entry name" value="Classic Zinc Finger"/>
    <property type="match status" value="4"/>
</dbReference>
<dbReference type="InterPro" id="IPR043359">
    <property type="entry name" value="GLI-like"/>
</dbReference>
<dbReference type="InterPro" id="IPR056436">
    <property type="entry name" value="Znf-C2H2_ZIC1-5/GLI1-3-like"/>
</dbReference>
<dbReference type="InterPro" id="IPR036236">
    <property type="entry name" value="Znf_C2H2_sf"/>
</dbReference>
<dbReference type="InterPro" id="IPR013087">
    <property type="entry name" value="Znf_C2H2_type"/>
</dbReference>
<dbReference type="InterPro" id="IPR041643">
    <property type="entry name" value="Znf_ZIC"/>
</dbReference>
<dbReference type="PANTHER" id="PTHR45718:SF8">
    <property type="entry name" value="GLIS FAMILY ZINC FINGER 2"/>
    <property type="match status" value="1"/>
</dbReference>
<dbReference type="PANTHER" id="PTHR45718">
    <property type="entry name" value="TRANSCRIPTIONAL ACTIVATOR CUBITUS INTERRUPTUS"/>
    <property type="match status" value="1"/>
</dbReference>
<dbReference type="Pfam" id="PF00096">
    <property type="entry name" value="zf-C2H2"/>
    <property type="match status" value="2"/>
</dbReference>
<dbReference type="Pfam" id="PF23561">
    <property type="entry name" value="zf-C2H2_15"/>
    <property type="match status" value="1"/>
</dbReference>
<dbReference type="Pfam" id="PF18366">
    <property type="entry name" value="zf_ZIC"/>
    <property type="match status" value="1"/>
</dbReference>
<dbReference type="SMART" id="SM00355">
    <property type="entry name" value="ZnF_C2H2"/>
    <property type="match status" value="5"/>
</dbReference>
<dbReference type="SUPFAM" id="SSF57667">
    <property type="entry name" value="beta-beta-alpha zinc fingers"/>
    <property type="match status" value="2"/>
</dbReference>
<dbReference type="PROSITE" id="PS00028">
    <property type="entry name" value="ZINC_FINGER_C2H2_1"/>
    <property type="match status" value="3"/>
</dbReference>
<dbReference type="PROSITE" id="PS50157">
    <property type="entry name" value="ZINC_FINGER_C2H2_2"/>
    <property type="match status" value="4"/>
</dbReference>
<keyword id="KW-0217">Developmental protein</keyword>
<keyword id="KW-0221">Differentiation</keyword>
<keyword id="KW-0238">DNA-binding</keyword>
<keyword id="KW-0479">Metal-binding</keyword>
<keyword id="KW-0524">Neurogenesis</keyword>
<keyword id="KW-0539">Nucleus</keyword>
<keyword id="KW-1185">Reference proteome</keyword>
<keyword id="KW-0677">Repeat</keyword>
<keyword id="KW-0862">Zinc</keyword>
<keyword id="KW-0863">Zinc-finger</keyword>
<sequence length="530" mass="58225">MSVEALGNTGMEPPFTKRNPALRLVDLAGAHHPHHHHHPPHLPQSVTGYPGYVAHSHSMAHVHPGEFAADSRLGPSAAFRTEHIGHPGALKLSPAHNPHHRHHHHHHHHHHMAGHAEVASSQTGAFGPAQSPAGSYSSLPHPAQAICAAGRDWLIGRDVTVPVMPGLTEQHSPSHHGMFLSTTGSYHGHHTEAGSHPYFSGAPEQASHATPGGQPLNGHIRLGLPGDMYTRSDHFSQPVTRTDHFASPSLHNYCGMNLNMNITPHHHGPGAFFRYMRQAIKQELICKWIEEDQLPKKLCSKTFSTMHELVTHVTVEHVGGPEQSNHICFWEECPREGKPFKAKYKLVNHIRVHTGEKPFPCPFPGCGKVFARSENLKIHKRTHTGEKPFKCEFEGCDRRFANSSDRKKHSHVHTSDKPYNCKVRGCDKSYTHPSSLRKHMKVHCKSPPPSSGYESSIPSLVSPSSDSGQDPGATSSQPEPPTSSQGANLSEWYVCQQGSAASGIPTPPGNTPSPEHRKPSYSNWQATNTF</sequence>
<accession>A0JC51</accession>
<comment type="function">
    <text evidence="1 7">May bind to DNA (By similarity). Induces neural and neural crest differentiation. Does not induce anterior neural tissue.</text>
</comment>
<comment type="subcellular location">
    <subcellularLocation>
        <location evidence="2">Nucleus</location>
    </subcellularLocation>
</comment>
<comment type="tissue specificity">
    <text evidence="7">At mid-gastrula stage (stage 11.5), weakly expressed in the prospective neural fold. Expressed in the neural plate border region at early neurula stage (stage 15) with strongest expression in the prospective regions of the hyoid and branchial crests. Expression in the dorsal central nervous system (CNS) continues through late neurula stage and early tail bud stages with expression strongest in the olfactory placode and expression levels increasing as development progresses. Becomes expressed in somites.</text>
</comment>
<comment type="developmental stage">
    <text evidence="7">Expressed zygotically. First detected at mid-gastrula stage.</text>
</comment>
<comment type="similarity">
    <text evidence="4">Belongs to the GLI C2H2-type zinc-finger protein family.</text>
</comment>